<proteinExistence type="inferred from homology"/>
<name>UREG_HAHCH</name>
<protein>
    <recommendedName>
        <fullName evidence="1">Urease accessory protein UreG</fullName>
    </recommendedName>
</protein>
<comment type="function">
    <text evidence="1">Facilitates the functional incorporation of the urease nickel metallocenter. This process requires GTP hydrolysis, probably effectuated by UreG.</text>
</comment>
<comment type="subunit">
    <text evidence="1">Homodimer. UreD, UreF and UreG form a complex that acts as a GTP-hydrolysis-dependent molecular chaperone, activating the urease apoprotein by helping to assemble the nickel containing metallocenter of UreC. The UreE protein probably delivers the nickel.</text>
</comment>
<comment type="subcellular location">
    <subcellularLocation>
        <location evidence="1">Cytoplasm</location>
    </subcellularLocation>
</comment>
<comment type="similarity">
    <text evidence="1">Belongs to the SIMIBI class G3E GTPase family. UreG subfamily.</text>
</comment>
<organism>
    <name type="scientific">Hahella chejuensis (strain KCTC 2396)</name>
    <dbReference type="NCBI Taxonomy" id="349521"/>
    <lineage>
        <taxon>Bacteria</taxon>
        <taxon>Pseudomonadati</taxon>
        <taxon>Pseudomonadota</taxon>
        <taxon>Gammaproteobacteria</taxon>
        <taxon>Oceanospirillales</taxon>
        <taxon>Hahellaceae</taxon>
        <taxon>Hahella</taxon>
    </lineage>
</organism>
<feature type="chain" id="PRO_1000145176" description="Urease accessory protein UreG">
    <location>
        <begin position="1"/>
        <end position="204"/>
    </location>
</feature>
<feature type="binding site" evidence="1">
    <location>
        <begin position="12"/>
        <end position="19"/>
    </location>
    <ligand>
        <name>GTP</name>
        <dbReference type="ChEBI" id="CHEBI:37565"/>
    </ligand>
</feature>
<sequence>MSTQTLRVGIGGPVGSGKTALVARLCQELRERFNIAVVTNDIYTEEDAQFLIRHQALTEDRIIGVETGGCPHTAIREDASMNLAAIDTLTARHPGLDLVLVESGGDNLSATFSPELSDLTLYVIDVSAGDKIPRKGGPGITKSDLLIINKTDLAPIVGASLEVMDRDARKMRGDKPFIFSNMKTGEGLQDIIRFIIDQGMLQAA</sequence>
<evidence type="ECO:0000255" key="1">
    <source>
        <dbReference type="HAMAP-Rule" id="MF_01389"/>
    </source>
</evidence>
<reference key="1">
    <citation type="journal article" date="2005" name="Nucleic Acids Res.">
        <title>Genomic blueprint of Hahella chejuensis, a marine microbe producing an algicidal agent.</title>
        <authorList>
            <person name="Jeong H."/>
            <person name="Yim J.H."/>
            <person name="Lee C."/>
            <person name="Choi S.-H."/>
            <person name="Park Y.K."/>
            <person name="Yoon S.H."/>
            <person name="Hur C.-G."/>
            <person name="Kang H.-Y."/>
            <person name="Kim D."/>
            <person name="Lee H.H."/>
            <person name="Park K.H."/>
            <person name="Park S.-H."/>
            <person name="Park H.-S."/>
            <person name="Lee H.K."/>
            <person name="Oh T.K."/>
            <person name="Kim J.F."/>
        </authorList>
    </citation>
    <scope>NUCLEOTIDE SEQUENCE [LARGE SCALE GENOMIC DNA]</scope>
    <source>
        <strain>KCTC 2396</strain>
    </source>
</reference>
<accession>Q2SDP8</accession>
<gene>
    <name evidence="1" type="primary">ureG</name>
    <name type="ordered locus">HCH_04526</name>
</gene>
<dbReference type="EMBL" id="CP000155">
    <property type="protein sequence ID" value="ABC31226.1"/>
    <property type="molecule type" value="Genomic_DNA"/>
</dbReference>
<dbReference type="RefSeq" id="WP_011398293.1">
    <property type="nucleotide sequence ID" value="NC_007645.1"/>
</dbReference>
<dbReference type="SMR" id="Q2SDP8"/>
<dbReference type="STRING" id="349521.HCH_04526"/>
<dbReference type="KEGG" id="hch:HCH_04526"/>
<dbReference type="eggNOG" id="COG0378">
    <property type="taxonomic scope" value="Bacteria"/>
</dbReference>
<dbReference type="HOGENOM" id="CLU_072144_1_0_6"/>
<dbReference type="OrthoDB" id="9802035at2"/>
<dbReference type="Proteomes" id="UP000000238">
    <property type="component" value="Chromosome"/>
</dbReference>
<dbReference type="GO" id="GO:0005737">
    <property type="term" value="C:cytoplasm"/>
    <property type="evidence" value="ECO:0007669"/>
    <property type="project" value="UniProtKB-SubCell"/>
</dbReference>
<dbReference type="GO" id="GO:0005525">
    <property type="term" value="F:GTP binding"/>
    <property type="evidence" value="ECO:0007669"/>
    <property type="project" value="UniProtKB-KW"/>
</dbReference>
<dbReference type="GO" id="GO:0003924">
    <property type="term" value="F:GTPase activity"/>
    <property type="evidence" value="ECO:0007669"/>
    <property type="project" value="InterPro"/>
</dbReference>
<dbReference type="GO" id="GO:0016151">
    <property type="term" value="F:nickel cation binding"/>
    <property type="evidence" value="ECO:0007669"/>
    <property type="project" value="UniProtKB-UniRule"/>
</dbReference>
<dbReference type="GO" id="GO:0043419">
    <property type="term" value="P:urea catabolic process"/>
    <property type="evidence" value="ECO:0007669"/>
    <property type="project" value="InterPro"/>
</dbReference>
<dbReference type="CDD" id="cd05540">
    <property type="entry name" value="UreG"/>
    <property type="match status" value="1"/>
</dbReference>
<dbReference type="FunFam" id="3.40.50.300:FF:000208">
    <property type="entry name" value="Urease accessory protein UreG"/>
    <property type="match status" value="1"/>
</dbReference>
<dbReference type="Gene3D" id="3.40.50.300">
    <property type="entry name" value="P-loop containing nucleotide triphosphate hydrolases"/>
    <property type="match status" value="1"/>
</dbReference>
<dbReference type="HAMAP" id="MF_01389">
    <property type="entry name" value="UreG"/>
    <property type="match status" value="1"/>
</dbReference>
<dbReference type="InterPro" id="IPR003495">
    <property type="entry name" value="CobW/HypB/UreG_nucleotide-bd"/>
</dbReference>
<dbReference type="InterPro" id="IPR027417">
    <property type="entry name" value="P-loop_NTPase"/>
</dbReference>
<dbReference type="InterPro" id="IPR004400">
    <property type="entry name" value="UreG"/>
</dbReference>
<dbReference type="NCBIfam" id="TIGR00101">
    <property type="entry name" value="ureG"/>
    <property type="match status" value="1"/>
</dbReference>
<dbReference type="PANTHER" id="PTHR31715">
    <property type="entry name" value="UREASE ACCESSORY PROTEIN G"/>
    <property type="match status" value="1"/>
</dbReference>
<dbReference type="PANTHER" id="PTHR31715:SF0">
    <property type="entry name" value="UREASE ACCESSORY PROTEIN G"/>
    <property type="match status" value="1"/>
</dbReference>
<dbReference type="Pfam" id="PF02492">
    <property type="entry name" value="cobW"/>
    <property type="match status" value="1"/>
</dbReference>
<dbReference type="PIRSF" id="PIRSF005624">
    <property type="entry name" value="Ni-bind_GTPase"/>
    <property type="match status" value="1"/>
</dbReference>
<dbReference type="SUPFAM" id="SSF52540">
    <property type="entry name" value="P-loop containing nucleoside triphosphate hydrolases"/>
    <property type="match status" value="1"/>
</dbReference>
<keyword id="KW-0143">Chaperone</keyword>
<keyword id="KW-0963">Cytoplasm</keyword>
<keyword id="KW-0342">GTP-binding</keyword>
<keyword id="KW-0996">Nickel insertion</keyword>
<keyword id="KW-0547">Nucleotide-binding</keyword>
<keyword id="KW-1185">Reference proteome</keyword>